<organism>
    <name type="scientific">Arabidopsis thaliana</name>
    <name type="common">Mouse-ear cress</name>
    <dbReference type="NCBI Taxonomy" id="3702"/>
    <lineage>
        <taxon>Eukaryota</taxon>
        <taxon>Viridiplantae</taxon>
        <taxon>Streptophyta</taxon>
        <taxon>Embryophyta</taxon>
        <taxon>Tracheophyta</taxon>
        <taxon>Spermatophyta</taxon>
        <taxon>Magnoliopsida</taxon>
        <taxon>eudicotyledons</taxon>
        <taxon>Gunneridae</taxon>
        <taxon>Pentapetalae</taxon>
        <taxon>rosids</taxon>
        <taxon>malvids</taxon>
        <taxon>Brassicales</taxon>
        <taxon>Brassicaceae</taxon>
        <taxon>Camelineae</taxon>
        <taxon>Arabidopsis</taxon>
    </lineage>
</organism>
<gene>
    <name type="primary">PAT09</name>
    <name type="ordered locus">At5g50020</name>
    <name type="ORF">MPF21.3</name>
</gene>
<keyword id="KW-0012">Acyltransferase</keyword>
<keyword id="KW-0025">Alternative splicing</keyword>
<keyword id="KW-1003">Cell membrane</keyword>
<keyword id="KW-0449">Lipoprotein</keyword>
<keyword id="KW-0472">Membrane</keyword>
<keyword id="KW-0564">Palmitate</keyword>
<keyword id="KW-1185">Reference proteome</keyword>
<keyword id="KW-0808">Transferase</keyword>
<keyword id="KW-0812">Transmembrane</keyword>
<keyword id="KW-1133">Transmembrane helix</keyword>
<evidence type="ECO:0000250" key="1"/>
<evidence type="ECO:0000255" key="2"/>
<evidence type="ECO:0000255" key="3">
    <source>
        <dbReference type="PROSITE-ProRule" id="PRU00067"/>
    </source>
</evidence>
<evidence type="ECO:0000256" key="4">
    <source>
        <dbReference type="SAM" id="MobiDB-lite"/>
    </source>
</evidence>
<evidence type="ECO:0000269" key="5">
    <source>
    </source>
</evidence>
<evidence type="ECO:0000269" key="6">
    <source ref="5"/>
</evidence>
<evidence type="ECO:0000303" key="7">
    <source>
    </source>
</evidence>
<evidence type="ECO:0000305" key="8"/>
<feature type="chain" id="PRO_0000315352" description="Probable protein S-acyltransferase 9">
    <location>
        <begin position="1"/>
        <end position="407"/>
    </location>
</feature>
<feature type="transmembrane region" description="Helical" evidence="2">
    <location>
        <begin position="28"/>
        <end position="48"/>
    </location>
</feature>
<feature type="transmembrane region" description="Helical" evidence="2">
    <location>
        <begin position="62"/>
        <end position="82"/>
    </location>
</feature>
<feature type="transmembrane region" description="Helical" evidence="2">
    <location>
        <begin position="174"/>
        <end position="194"/>
    </location>
</feature>
<feature type="transmembrane region" description="Helical" evidence="2">
    <location>
        <begin position="217"/>
        <end position="237"/>
    </location>
</feature>
<feature type="domain" description="DHHC" evidence="3">
    <location>
        <begin position="136"/>
        <end position="179"/>
    </location>
</feature>
<feature type="region of interest" description="Disordered" evidence="4">
    <location>
        <begin position="300"/>
        <end position="407"/>
    </location>
</feature>
<feature type="compositionally biased region" description="Basic and acidic residues" evidence="4">
    <location>
        <begin position="346"/>
        <end position="356"/>
    </location>
</feature>
<feature type="active site" description="S-palmitoyl cysteine intermediate" evidence="1">
    <location>
        <position position="166"/>
    </location>
</feature>
<feature type="splice variant" id="VSP_047438" description="In isoform 2." evidence="8">
    <original>M</original>
    <variation>MNDSWSAGPDRILQFVRECSEECLIRSLILM</variation>
    <location>
        <position position="1"/>
    </location>
</feature>
<feature type="splice variant" id="VSP_047439" description="In isoform 2 and isoform 3." evidence="7">
    <original>W</original>
    <variation>WVGQCIGV</variation>
    <location>
        <position position="168"/>
    </location>
</feature>
<reference key="1">
    <citation type="journal article" date="2012" name="Plant Physiol.">
        <title>Genomics and localization of the Arabidopsis DHHC-cysteine-rich domain S-acyltransferase protein family.</title>
        <authorList>
            <person name="Batistic O."/>
        </authorList>
    </citation>
    <scope>NUCLEOTIDE SEQUENCE [MRNA] (ISOFORM 3)</scope>
    <scope>ALTERNATIVE SPLICING</scope>
    <scope>SUBCELLULAR LOCATION</scope>
    <scope>TISSUE SPECIFICITY</scope>
    <scope>GENE FAMILY</scope>
    <scope>NOMENCLATURE</scope>
</reference>
<reference key="2">
    <citation type="submission" date="1999-04" db="EMBL/GenBank/DDBJ databases">
        <title>Structural analysis of Arabidopsis thaliana chromosome 5. XI.</title>
        <authorList>
            <person name="Kaneko T."/>
            <person name="Katoh T."/>
            <person name="Asamizu E."/>
            <person name="Sato S."/>
            <person name="Nakamura Y."/>
            <person name="Kotani H."/>
            <person name="Tabata S."/>
        </authorList>
    </citation>
    <scope>NUCLEOTIDE SEQUENCE [LARGE SCALE GENOMIC DNA]</scope>
    <source>
        <strain>cv. Columbia</strain>
    </source>
</reference>
<reference key="3">
    <citation type="journal article" date="2017" name="Plant J.">
        <title>Araport11: a complete reannotation of the Arabidopsis thaliana reference genome.</title>
        <authorList>
            <person name="Cheng C.Y."/>
            <person name="Krishnakumar V."/>
            <person name="Chan A.P."/>
            <person name="Thibaud-Nissen F."/>
            <person name="Schobel S."/>
            <person name="Town C.D."/>
        </authorList>
    </citation>
    <scope>GENOME REANNOTATION</scope>
    <source>
        <strain>cv. Columbia</strain>
    </source>
</reference>
<reference key="4">
    <citation type="journal article" date="2003" name="Science">
        <title>Empirical analysis of transcriptional activity in the Arabidopsis genome.</title>
        <authorList>
            <person name="Yamada K."/>
            <person name="Lim J."/>
            <person name="Dale J.M."/>
            <person name="Chen H."/>
            <person name="Shinn P."/>
            <person name="Palm C.J."/>
            <person name="Southwick A.M."/>
            <person name="Wu H.C."/>
            <person name="Kim C.J."/>
            <person name="Nguyen M."/>
            <person name="Pham P.K."/>
            <person name="Cheuk R.F."/>
            <person name="Karlin-Newmann G."/>
            <person name="Liu S.X."/>
            <person name="Lam B."/>
            <person name="Sakano H."/>
            <person name="Wu T."/>
            <person name="Yu G."/>
            <person name="Miranda M."/>
            <person name="Quach H.L."/>
            <person name="Tripp M."/>
            <person name="Chang C.H."/>
            <person name="Lee J.M."/>
            <person name="Toriumi M.J."/>
            <person name="Chan M.M."/>
            <person name="Tang C.C."/>
            <person name="Onodera C.S."/>
            <person name="Deng J.M."/>
            <person name="Akiyama K."/>
            <person name="Ansari Y."/>
            <person name="Arakawa T."/>
            <person name="Banh J."/>
            <person name="Banno F."/>
            <person name="Bowser L."/>
            <person name="Brooks S.Y."/>
            <person name="Carninci P."/>
            <person name="Chao Q."/>
            <person name="Choy N."/>
            <person name="Enju A."/>
            <person name="Goldsmith A.D."/>
            <person name="Gurjal M."/>
            <person name="Hansen N.F."/>
            <person name="Hayashizaki Y."/>
            <person name="Johnson-Hopson C."/>
            <person name="Hsuan V.W."/>
            <person name="Iida K."/>
            <person name="Karnes M."/>
            <person name="Khan S."/>
            <person name="Koesema E."/>
            <person name="Ishida J."/>
            <person name="Jiang P.X."/>
            <person name="Jones T."/>
            <person name="Kawai J."/>
            <person name="Kamiya A."/>
            <person name="Meyers C."/>
            <person name="Nakajima M."/>
            <person name="Narusaka M."/>
            <person name="Seki M."/>
            <person name="Sakurai T."/>
            <person name="Satou M."/>
            <person name="Tamse R."/>
            <person name="Vaysberg M."/>
            <person name="Wallender E.K."/>
            <person name="Wong C."/>
            <person name="Yamamura Y."/>
            <person name="Yuan S."/>
            <person name="Shinozaki K."/>
            <person name="Davis R.W."/>
            <person name="Theologis A."/>
            <person name="Ecker J.R."/>
        </authorList>
    </citation>
    <scope>NUCLEOTIDE SEQUENCE [LARGE SCALE MRNA] (ISOFORM 1)</scope>
    <source>
        <strain>cv. Columbia</strain>
    </source>
</reference>
<reference key="5">
    <citation type="book" date="2007" name="Proceedings of the 18th international conference on Arabidopsis research">
        <title>S-acylation: dynamic control of plant development and sigalling by lipid modification of proteins.</title>
        <authorList>
            <person name="Hemsley P.A."/>
            <person name="Taylor L."/>
            <person name="Grierson C.S."/>
        </authorList>
    </citation>
    <scope>GENE FAMILY</scope>
    <scope>FUNCTION</scope>
</reference>
<comment type="function">
    <text evidence="1 6">Palmitoyl acyltransferase.</text>
</comment>
<comment type="catalytic activity">
    <reaction>
        <text>L-cysteinyl-[protein] + hexadecanoyl-CoA = S-hexadecanoyl-L-cysteinyl-[protein] + CoA</text>
        <dbReference type="Rhea" id="RHEA:36683"/>
        <dbReference type="Rhea" id="RHEA-COMP:10131"/>
        <dbReference type="Rhea" id="RHEA-COMP:11032"/>
        <dbReference type="ChEBI" id="CHEBI:29950"/>
        <dbReference type="ChEBI" id="CHEBI:57287"/>
        <dbReference type="ChEBI" id="CHEBI:57379"/>
        <dbReference type="ChEBI" id="CHEBI:74151"/>
        <dbReference type="EC" id="2.3.1.225"/>
    </reaction>
</comment>
<comment type="subcellular location">
    <subcellularLocation>
        <location evidence="8">Cell membrane</location>
        <topology evidence="8">Multi-pass membrane protein</topology>
    </subcellularLocation>
</comment>
<comment type="alternative products">
    <event type="alternative splicing"/>
    <isoform>
        <id>Q8VYS8-1</id>
        <name>1</name>
        <sequence type="displayed"/>
    </isoform>
    <isoform>
        <id>Q8VYS8-2</id>
        <name>2</name>
        <sequence type="described" ref="VSP_047438 VSP_047439"/>
    </isoform>
    <isoform>
        <id>Q8VYS8-3</id>
        <name>3</name>
        <sequence type="described" ref="VSP_047439"/>
    </isoform>
</comment>
<comment type="tissue specificity">
    <text evidence="5">Mainly expressed in seeds.</text>
</comment>
<comment type="domain">
    <text evidence="1">The DHHC domain is required for palmitoyltransferase activity.</text>
</comment>
<comment type="similarity">
    <text evidence="8">Belongs to the DHHC palmitoyltransferase family.</text>
</comment>
<comment type="sequence caution" evidence="8">
    <conflict type="erroneous gene model prediction">
        <sequence resource="EMBL-CDS" id="BAB10288"/>
    </conflict>
</comment>
<protein>
    <recommendedName>
        <fullName>Probable protein S-acyltransferase 9</fullName>
        <ecNumber>2.3.1.225</ecNumber>
    </recommendedName>
    <alternativeName>
        <fullName>Probable palmitoyltransferase At5g50020</fullName>
    </alternativeName>
    <alternativeName>
        <fullName>Zinc finger DHHC domain-containing protein At5g50020</fullName>
    </alternativeName>
</protein>
<dbReference type="EC" id="2.3.1.225"/>
<dbReference type="EMBL" id="JF792493">
    <property type="protein sequence ID" value="AEF58502.1"/>
    <property type="molecule type" value="mRNA"/>
</dbReference>
<dbReference type="EMBL" id="AB026650">
    <property type="protein sequence ID" value="BAB10288.1"/>
    <property type="status" value="ALT_SEQ"/>
    <property type="molecule type" value="Genomic_DNA"/>
</dbReference>
<dbReference type="EMBL" id="CP002688">
    <property type="protein sequence ID" value="AED95886.1"/>
    <property type="molecule type" value="Genomic_DNA"/>
</dbReference>
<dbReference type="EMBL" id="CP002688">
    <property type="protein sequence ID" value="AED95887.1"/>
    <property type="molecule type" value="Genomic_DNA"/>
</dbReference>
<dbReference type="EMBL" id="CP002688">
    <property type="protein sequence ID" value="ANM68839.1"/>
    <property type="molecule type" value="Genomic_DNA"/>
</dbReference>
<dbReference type="EMBL" id="AY070050">
    <property type="protein sequence ID" value="AAL49807.1"/>
    <property type="molecule type" value="mRNA"/>
</dbReference>
<dbReference type="EMBL" id="AY096683">
    <property type="protein sequence ID" value="AAM20317.1"/>
    <property type="molecule type" value="mRNA"/>
</dbReference>
<dbReference type="RefSeq" id="NP_001190503.1">
    <molecule id="Q8VYS8-2"/>
    <property type="nucleotide sequence ID" value="NM_001203574.1"/>
</dbReference>
<dbReference type="RefSeq" id="NP_001330558.1">
    <molecule id="Q8VYS8-3"/>
    <property type="nucleotide sequence ID" value="NM_001344870.1"/>
</dbReference>
<dbReference type="RefSeq" id="NP_199813.2">
    <molecule id="Q8VYS8-1"/>
    <property type="nucleotide sequence ID" value="NM_124381.3"/>
</dbReference>
<dbReference type="SMR" id="Q8VYS8"/>
<dbReference type="BioGRID" id="20312">
    <property type="interactions" value="2"/>
</dbReference>
<dbReference type="FunCoup" id="Q8VYS8">
    <property type="interactions" value="3264"/>
</dbReference>
<dbReference type="IntAct" id="Q8VYS8">
    <property type="interactions" value="2"/>
</dbReference>
<dbReference type="STRING" id="3702.Q8VYS8"/>
<dbReference type="iPTMnet" id="Q8VYS8"/>
<dbReference type="PaxDb" id="3702-AT5G50020.2"/>
<dbReference type="ProteomicsDB" id="232339">
    <molecule id="Q8VYS8-1"/>
</dbReference>
<dbReference type="EnsemblPlants" id="AT5G50020.1">
    <molecule id="Q8VYS8-1"/>
    <property type="protein sequence ID" value="AT5G50020.1"/>
    <property type="gene ID" value="AT5G50020"/>
</dbReference>
<dbReference type="EnsemblPlants" id="AT5G50020.2">
    <molecule id="Q8VYS8-2"/>
    <property type="protein sequence ID" value="AT5G50020.2"/>
    <property type="gene ID" value="AT5G50020"/>
</dbReference>
<dbReference type="EnsemblPlants" id="AT5G50020.3">
    <molecule id="Q8VYS8-3"/>
    <property type="protein sequence ID" value="AT5G50020.3"/>
    <property type="gene ID" value="AT5G50020"/>
</dbReference>
<dbReference type="GeneID" id="835066"/>
<dbReference type="Gramene" id="AT5G50020.1">
    <molecule id="Q8VYS8-1"/>
    <property type="protein sequence ID" value="AT5G50020.1"/>
    <property type="gene ID" value="AT5G50020"/>
</dbReference>
<dbReference type="Gramene" id="AT5G50020.2">
    <molecule id="Q8VYS8-2"/>
    <property type="protein sequence ID" value="AT5G50020.2"/>
    <property type="gene ID" value="AT5G50020"/>
</dbReference>
<dbReference type="Gramene" id="AT5G50020.3">
    <molecule id="Q8VYS8-3"/>
    <property type="protein sequence ID" value="AT5G50020.3"/>
    <property type="gene ID" value="AT5G50020"/>
</dbReference>
<dbReference type="KEGG" id="ath:AT5G50020"/>
<dbReference type="Araport" id="AT5G50020"/>
<dbReference type="TAIR" id="AT5G50020"/>
<dbReference type="eggNOG" id="KOG1311">
    <property type="taxonomic scope" value="Eukaryota"/>
</dbReference>
<dbReference type="InParanoid" id="Q8VYS8"/>
<dbReference type="OrthoDB" id="4096362at2759"/>
<dbReference type="PhylomeDB" id="Q8VYS8"/>
<dbReference type="BRENDA" id="2.3.1.225">
    <property type="organism ID" value="399"/>
</dbReference>
<dbReference type="PRO" id="PR:Q8VYS8"/>
<dbReference type="Proteomes" id="UP000006548">
    <property type="component" value="Chromosome 5"/>
</dbReference>
<dbReference type="ExpressionAtlas" id="Q8VYS8">
    <property type="expression patterns" value="baseline and differential"/>
</dbReference>
<dbReference type="GO" id="GO:0005886">
    <property type="term" value="C:plasma membrane"/>
    <property type="evidence" value="ECO:0007669"/>
    <property type="project" value="UniProtKB-SubCell"/>
</dbReference>
<dbReference type="GO" id="GO:0019706">
    <property type="term" value="F:protein-cysteine S-palmitoyltransferase activity"/>
    <property type="evidence" value="ECO:0007669"/>
    <property type="project" value="UniProtKB-EC"/>
</dbReference>
<dbReference type="InterPro" id="IPR001594">
    <property type="entry name" value="Palmitoyltrfase_DHHC"/>
</dbReference>
<dbReference type="InterPro" id="IPR039859">
    <property type="entry name" value="PFA4/ZDH16/20/ERF2-like"/>
</dbReference>
<dbReference type="PANTHER" id="PTHR22883:SF43">
    <property type="entry name" value="PALMITOYLTRANSFERASE APP"/>
    <property type="match status" value="1"/>
</dbReference>
<dbReference type="PANTHER" id="PTHR22883">
    <property type="entry name" value="ZINC FINGER DHHC DOMAIN CONTAINING PROTEIN"/>
    <property type="match status" value="1"/>
</dbReference>
<dbReference type="Pfam" id="PF01529">
    <property type="entry name" value="DHHC"/>
    <property type="match status" value="1"/>
</dbReference>
<dbReference type="PROSITE" id="PS50216">
    <property type="entry name" value="DHHC"/>
    <property type="match status" value="1"/>
</dbReference>
<proteinExistence type="evidence at transcript level"/>
<accession>Q8VYS8</accession>
<accession>F4K7H9</accession>
<accession>F6MDM7</accession>
<accession>Q9FGA9</accession>
<sequence>MAGRVFEAWKGSNKFLFGGRLIFGPDAWSIPFTFLLIITPVCFFSVFVATHLRRELLPNNAGHVFLVAGVLFTVFVLILLFLTSARDPGIVPRNSHPPEEELCYDTTVSSDGRQTPTVQIPRTKEVMVYGVSVRVKYCDTCMLYRPPRCSHCSICNNCVERFDHHCPWRNYRYFFMFVSSATILCIYIFSMSALYIKVLMDNHQGTVWRAMRESPWAVMLMIYCFISLWFVGGLTGFHLYLISTNQTTYENFRYRSDNRINVYNRGCSNNFFETFCSKVKPSRNDFRAFIKEEPPRNITLATTWERPEEADEENREERRQKVEDDLDIDEDVMKLQQRLNDEEGSDTAHHKIDIDQMRIGSNERAPTIRSEARHGNWGARSNAQEEDVIAGSSVRESRSYAAAEEGR</sequence>
<name>ZDH24_ARATH</name>